<accession>Q7TDB4</accession>
<keyword id="KW-0067">ATP-binding</keyword>
<keyword id="KW-0167">Capsid protein</keyword>
<keyword id="KW-0342">GTP-binding</keyword>
<keyword id="KW-0489">Methyltransferase</keyword>
<keyword id="KW-0506">mRNA capping</keyword>
<keyword id="KW-0507">mRNA processing</keyword>
<keyword id="KW-0511">Multifunctional enzyme</keyword>
<keyword id="KW-0547">Nucleotide-binding</keyword>
<keyword id="KW-0548">Nucleotidyltransferase</keyword>
<keyword id="KW-1185">Reference proteome</keyword>
<keyword id="KW-0949">S-adenosyl-L-methionine</keyword>
<keyword id="KW-0808">Transferase</keyword>
<keyword id="KW-0946">Virion</keyword>
<organism>
    <name type="scientific">Cryphonectria parasitica mycoreovirus 1 (strain 9B21)</name>
    <name type="common">CpMYRV-1</name>
    <dbReference type="NCBI Taxonomy" id="230407"/>
    <lineage>
        <taxon>Viruses</taxon>
        <taxon>Riboviria</taxon>
        <taxon>Orthornavirae</taxon>
        <taxon>Duplornaviricota</taxon>
        <taxon>Resentoviricetes</taxon>
        <taxon>Reovirales</taxon>
        <taxon>Spinareoviridae</taxon>
        <taxon>Mycoreovirus</taxon>
        <taxon>Mycoreovirus 1</taxon>
    </lineage>
</organism>
<reference key="1">
    <citation type="journal article" date="2004" name="J. Virol.">
        <title>A reovirus of the fungus Cryphonectria parasitica that is infectious as particles and related to the coltivirus genus of animal pathogens.</title>
        <authorList>
            <person name="Hillman B.I."/>
            <person name="Supyani S."/>
            <person name="Kondo H."/>
            <person name="Suzuki N."/>
        </authorList>
    </citation>
    <scope>NUCLEOTIDE SEQUENCE [GENOMIC RNA]</scope>
</reference>
<reference key="2">
    <citation type="journal article" date="2007" name="J. Gen. Virol.">
        <title>Baculovirus expression of the 11 mycoreovirus-1 genome segments and identification of the guanylyltransferase-encoding segment.</title>
        <authorList>
            <person name="Supyani S."/>
            <person name="Hillman B.I."/>
            <person name="Suzuki N."/>
        </authorList>
    </citation>
    <scope>MUTAGENESIS OF HIS-233; HIS-242; TYR-243; PHE-244 AND PHE-246</scope>
</reference>
<organismHost>
    <name type="scientific">Cryphonectria parasitica</name>
    <name type="common">Chestnut blight fungus</name>
    <name type="synonym">Endothia parasitica</name>
    <dbReference type="NCBI Taxonomy" id="5116"/>
</organismHost>
<protein>
    <recommendedName>
        <fullName>Outer capsid protein VP3</fullName>
    </recommendedName>
    <domain>
        <recommendedName>
            <fullName>mRNA guanylyltransferase</fullName>
            <ecNumber>2.7.7.50</ecNumber>
        </recommendedName>
    </domain>
    <domain>
        <recommendedName>
            <fullName>mRNA (guanine-N(7))-methyltransferase</fullName>
            <ecNumber>2.1.1.56</ecNumber>
        </recommendedName>
    </domain>
</protein>
<comment type="function">
    <text evidence="1">Outer capsid protein involved in mRNA capping. Catalyzes the last 3 enzymatic activities for formation of the 5' cap structure on the viral plus-strand transcripts, namely the RNA guanylyltransferase, RNA-7N- and RNA-2'O-methyltransferase activities (By similarity).</text>
</comment>
<comment type="catalytic activity">
    <reaction>
        <text>a 5'-end diphospho-ribonucleoside in mRNA + GTP + H(+) = a 5'-end (5'-triphosphoguanosine)-ribonucleoside in mRNA + diphosphate</text>
        <dbReference type="Rhea" id="RHEA:67012"/>
        <dbReference type="Rhea" id="RHEA-COMP:17165"/>
        <dbReference type="Rhea" id="RHEA-COMP:17166"/>
        <dbReference type="ChEBI" id="CHEBI:15378"/>
        <dbReference type="ChEBI" id="CHEBI:33019"/>
        <dbReference type="ChEBI" id="CHEBI:37565"/>
        <dbReference type="ChEBI" id="CHEBI:167616"/>
        <dbReference type="ChEBI" id="CHEBI:167617"/>
        <dbReference type="EC" id="2.7.7.50"/>
    </reaction>
</comment>
<comment type="catalytic activity">
    <reaction>
        <text>a 5'-end (5'-triphosphoguanosine)-ribonucleoside in mRNA + S-adenosyl-L-methionine = a 5'-end (N(7)-methyl 5'-triphosphoguanosine)-ribonucleoside in mRNA + S-adenosyl-L-homocysteine</text>
        <dbReference type="Rhea" id="RHEA:67008"/>
        <dbReference type="Rhea" id="RHEA-COMP:17166"/>
        <dbReference type="Rhea" id="RHEA-COMP:17167"/>
        <dbReference type="ChEBI" id="CHEBI:57856"/>
        <dbReference type="ChEBI" id="CHEBI:59789"/>
        <dbReference type="ChEBI" id="CHEBI:156461"/>
        <dbReference type="ChEBI" id="CHEBI:167617"/>
        <dbReference type="EC" id="2.1.1.56"/>
    </reaction>
</comment>
<comment type="subcellular location">
    <subcellularLocation>
        <location evidence="3">Virion</location>
    </subcellularLocation>
</comment>
<name>VP3_MYRV9</name>
<sequence length="1065" mass="120825">MFDRQYPTVHDLYIPFPVFQSRLEQPFDTTVTSIRELRTISSQSTVYGYDLTVNDPLYYDLEPLLGNSISLTLDPKLTDSERLDAVYLDINNRLANCHGDLLRKFSATSYSIDTSVIPYVFLPMYRYLLHIMTGSAFNSLFRQMIVNVDANCANADESLLTSAQHLFALLNKINPSRQLPAPLRHILINATIADVPYDMQGKFVPYNVVFLPTSNESLRDATIARIREPAGYHPRPSIVVPHYFVFRSTTDALCRFMYLAKRTFLHVNDKTATHTSVRRCELLRLNFPLDQSFAQLSLLVQLQLPLSTLSIQRLPHLSTTVNQLITLASSSYSEQAIINLLRVNWNVIGYIELSTLGEPSLPAIRVYDFTSSMNTRSVTQGPNVQIRTRSNAIDVHVREFIRFGRYLPLEIPKCRVPRLVSLQVINYSLNHLLSVTPWPDQYDVTRHRPERIIENSVKRTIQYQEYDPSVGTWATSSDMTNYTHIPSDSYYHQFIVTCLRSFCGLRDLPRENSARYPYVVLLYGLALGHEIAPSRMGLTYAMTSHMISYVLSTITTGIDVAPSEIISRFKLFLIDVPFADTIIHDLRKVTPNVNVHSTSIFTSNERGDARILTGWVVIRIAVSRFEQQKRSFEYMSYFNDILRFCDGGIIHFDIPDATFLMHVVTSLQCTPNRRVKVLSYFASQSPFSLTLHFYRDTTDPLLPVANIGHWVTRHQMKRYAYTDRDSTIPLRHEVIPALSTVMSRMTAEYSFVCQKSDLPVCLSALSTISNYARVATWTDYRGIAHWSGSAVIDPLRLLDSSRTGVLATNVPIEPLIAPSHGVPRLERSTYRVVDAFHLCSLIGPIFIQREFNIWTASRTSERTRHVIDVGGRDGAFRGLFPHAMYTVIDPAPAPQHMISNYISEPWDFNDFQGSLDRIMDTLGIIDPQDVFLVFSHVFISALNRPAAHVNALEQLGALQCSSVVSTQTSGSSASTLYSSYVNHNPFLEIRMENAAYLTRTYPSPYPLPTRAEMNEAILNNARSRLHQTSAAEILDLAMRFGYAPSYEAIVTLPALCDQHVVYAIQ</sequence>
<gene>
    <name type="primary">S3</name>
</gene>
<dbReference type="EC" id="2.7.7.50"/>
<dbReference type="EC" id="2.1.1.56"/>
<dbReference type="EMBL" id="AY277890">
    <property type="protein sequence ID" value="AAP45579.1"/>
    <property type="molecule type" value="Genomic_RNA"/>
</dbReference>
<dbReference type="RefSeq" id="YP_001936006.1">
    <property type="nucleotide sequence ID" value="NC_010745.1"/>
</dbReference>
<dbReference type="KEGG" id="vg:6336088"/>
<dbReference type="Proteomes" id="UP000006719">
    <property type="component" value="Genome"/>
</dbReference>
<dbReference type="GO" id="GO:0019028">
    <property type="term" value="C:viral capsid"/>
    <property type="evidence" value="ECO:0007669"/>
    <property type="project" value="UniProtKB-KW"/>
</dbReference>
<dbReference type="GO" id="GO:0005524">
    <property type="term" value="F:ATP binding"/>
    <property type="evidence" value="ECO:0007669"/>
    <property type="project" value="UniProtKB-KW"/>
</dbReference>
<dbReference type="GO" id="GO:0005525">
    <property type="term" value="F:GTP binding"/>
    <property type="evidence" value="ECO:0007669"/>
    <property type="project" value="UniProtKB-KW"/>
</dbReference>
<dbReference type="GO" id="GO:0004482">
    <property type="term" value="F:mRNA 5'-cap (guanine-N7-)-methyltransferase activity"/>
    <property type="evidence" value="ECO:0007669"/>
    <property type="project" value="UniProtKB-EC"/>
</dbReference>
<dbReference type="GO" id="GO:0004484">
    <property type="term" value="F:mRNA guanylyltransferase activity"/>
    <property type="evidence" value="ECO:0007669"/>
    <property type="project" value="UniProtKB-EC"/>
</dbReference>
<dbReference type="InterPro" id="IPR045917">
    <property type="entry name" value="VP3-like"/>
</dbReference>
<dbReference type="Pfam" id="PF18965">
    <property type="entry name" value="VP3-like"/>
    <property type="match status" value="1"/>
</dbReference>
<feature type="chain" id="PRO_0000403425" description="Outer capsid protein VP3">
    <location>
        <begin position="1"/>
        <end position="1065"/>
    </location>
</feature>
<feature type="mutagenesis site" description="Complete loss of GTP-binding activity." evidence="2">
    <original>H</original>
    <variation>A</variation>
    <location>
        <position position="233"/>
    </location>
</feature>
<feature type="mutagenesis site" description="Complete loss of GTP-binding activity." evidence="2">
    <original>H</original>
    <variation>A</variation>
    <location>
        <position position="242"/>
    </location>
</feature>
<feature type="mutagenesis site" description="Complete loss of GTP-binding activity." evidence="2">
    <original>Y</original>
    <variation>A</variation>
    <location>
        <position position="243"/>
    </location>
</feature>
<feature type="mutagenesis site" description="Complete loss of GTP-binding activity." evidence="2">
    <original>F</original>
    <variation>A</variation>
    <location>
        <position position="244"/>
    </location>
</feature>
<feature type="mutagenesis site" description="Complete loss of GTP-binding activity." evidence="2">
    <original>F</original>
    <variation>A</variation>
    <location>
        <position position="246"/>
    </location>
</feature>
<proteinExistence type="evidence at protein level"/>
<evidence type="ECO:0000250" key="1"/>
<evidence type="ECO:0000269" key="2">
    <source>
    </source>
</evidence>
<evidence type="ECO:0000305" key="3"/>